<protein>
    <recommendedName>
        <fullName evidence="2">Elongation factor Tu</fullName>
        <shortName evidence="2">EF-Tu</shortName>
        <ecNumber evidence="2">3.6.5.3</ecNumber>
    </recommendedName>
</protein>
<proteinExistence type="inferred from homology"/>
<accession>P42477</accession>
<sequence length="400" mass="43738">MAKQKFERNKPHINIGTIGHVDHGKTTLTAAITKTMALRGRAEFRAFDQIDNAPEERARGITISISHVEYETENRHYAHVDCPGHADYIKNMITGAAQMDGAILVVSAPDGPMPQTREHILLAGQVEVPAMVVFLNKVDMMDDPELLELVEMELRELLTKYGFPGDEIPIVRGSAKGALDSASTDASQPEYQSIQELMQAVDDYIPTPERAIDKPFLMPIEDVFSIKGRGTVVTGRIERGIVKVGDTIEIIGMGPDVRTTAVTGVEMFKKLLDEGRAGDNVGALLRGIERTDVERGQVLAKPGSIKPHTKFKAEVYVLKKEEGGRHSPFFSGYRPQFYVRTTDVTGAIGLPEGVEMVMPGDNIQMTVELIVPVAIEQGLKFAIREGGRTVGAGIVPEIIA</sequence>
<evidence type="ECO:0000250" key="1"/>
<evidence type="ECO:0000255" key="2">
    <source>
        <dbReference type="HAMAP-Rule" id="MF_00118"/>
    </source>
</evidence>
<name>EFTU_HERAU</name>
<gene>
    <name evidence="2" type="primary">tuf</name>
</gene>
<dbReference type="EC" id="3.6.5.3" evidence="2"/>
<dbReference type="EMBL" id="X76868">
    <property type="protein sequence ID" value="CAA54196.1"/>
    <property type="molecule type" value="Genomic_DNA"/>
</dbReference>
<dbReference type="SMR" id="P42477"/>
<dbReference type="GO" id="GO:0005829">
    <property type="term" value="C:cytosol"/>
    <property type="evidence" value="ECO:0007669"/>
    <property type="project" value="TreeGrafter"/>
</dbReference>
<dbReference type="GO" id="GO:0005525">
    <property type="term" value="F:GTP binding"/>
    <property type="evidence" value="ECO:0007669"/>
    <property type="project" value="UniProtKB-UniRule"/>
</dbReference>
<dbReference type="GO" id="GO:0003924">
    <property type="term" value="F:GTPase activity"/>
    <property type="evidence" value="ECO:0007669"/>
    <property type="project" value="InterPro"/>
</dbReference>
<dbReference type="GO" id="GO:0003746">
    <property type="term" value="F:translation elongation factor activity"/>
    <property type="evidence" value="ECO:0007669"/>
    <property type="project" value="UniProtKB-UniRule"/>
</dbReference>
<dbReference type="CDD" id="cd01884">
    <property type="entry name" value="EF_Tu"/>
    <property type="match status" value="1"/>
</dbReference>
<dbReference type="CDD" id="cd03697">
    <property type="entry name" value="EFTU_II"/>
    <property type="match status" value="1"/>
</dbReference>
<dbReference type="CDD" id="cd03707">
    <property type="entry name" value="EFTU_III"/>
    <property type="match status" value="1"/>
</dbReference>
<dbReference type="FunFam" id="2.40.30.10:FF:000001">
    <property type="entry name" value="Elongation factor Tu"/>
    <property type="match status" value="1"/>
</dbReference>
<dbReference type="FunFam" id="3.40.50.300:FF:000003">
    <property type="entry name" value="Elongation factor Tu"/>
    <property type="match status" value="1"/>
</dbReference>
<dbReference type="Gene3D" id="3.40.50.300">
    <property type="entry name" value="P-loop containing nucleotide triphosphate hydrolases"/>
    <property type="match status" value="1"/>
</dbReference>
<dbReference type="Gene3D" id="2.40.30.10">
    <property type="entry name" value="Translation factors"/>
    <property type="match status" value="2"/>
</dbReference>
<dbReference type="HAMAP" id="MF_00118_B">
    <property type="entry name" value="EF_Tu_B"/>
    <property type="match status" value="1"/>
</dbReference>
<dbReference type="InterPro" id="IPR041709">
    <property type="entry name" value="EF-Tu_GTP-bd"/>
</dbReference>
<dbReference type="InterPro" id="IPR050055">
    <property type="entry name" value="EF-Tu_GTPase"/>
</dbReference>
<dbReference type="InterPro" id="IPR004161">
    <property type="entry name" value="EFTu-like_2"/>
</dbReference>
<dbReference type="InterPro" id="IPR033720">
    <property type="entry name" value="EFTU_2"/>
</dbReference>
<dbReference type="InterPro" id="IPR031157">
    <property type="entry name" value="G_TR_CS"/>
</dbReference>
<dbReference type="InterPro" id="IPR027417">
    <property type="entry name" value="P-loop_NTPase"/>
</dbReference>
<dbReference type="InterPro" id="IPR005225">
    <property type="entry name" value="Small_GTP-bd"/>
</dbReference>
<dbReference type="InterPro" id="IPR000795">
    <property type="entry name" value="T_Tr_GTP-bd_dom"/>
</dbReference>
<dbReference type="InterPro" id="IPR009000">
    <property type="entry name" value="Transl_B-barrel_sf"/>
</dbReference>
<dbReference type="InterPro" id="IPR009001">
    <property type="entry name" value="Transl_elong_EF1A/Init_IF2_C"/>
</dbReference>
<dbReference type="InterPro" id="IPR004541">
    <property type="entry name" value="Transl_elong_EFTu/EF1A_bac/org"/>
</dbReference>
<dbReference type="InterPro" id="IPR004160">
    <property type="entry name" value="Transl_elong_EFTu/EF1A_C"/>
</dbReference>
<dbReference type="NCBIfam" id="TIGR00485">
    <property type="entry name" value="EF-Tu"/>
    <property type="match status" value="1"/>
</dbReference>
<dbReference type="NCBIfam" id="NF000766">
    <property type="entry name" value="PRK00049.1"/>
    <property type="match status" value="1"/>
</dbReference>
<dbReference type="NCBIfam" id="NF009372">
    <property type="entry name" value="PRK12735.1"/>
    <property type="match status" value="1"/>
</dbReference>
<dbReference type="NCBIfam" id="NF009373">
    <property type="entry name" value="PRK12736.1"/>
    <property type="match status" value="1"/>
</dbReference>
<dbReference type="NCBIfam" id="TIGR00231">
    <property type="entry name" value="small_GTP"/>
    <property type="match status" value="1"/>
</dbReference>
<dbReference type="PANTHER" id="PTHR43721:SF22">
    <property type="entry name" value="ELONGATION FACTOR TU, MITOCHONDRIAL"/>
    <property type="match status" value="1"/>
</dbReference>
<dbReference type="PANTHER" id="PTHR43721">
    <property type="entry name" value="ELONGATION FACTOR TU-RELATED"/>
    <property type="match status" value="1"/>
</dbReference>
<dbReference type="Pfam" id="PF00009">
    <property type="entry name" value="GTP_EFTU"/>
    <property type="match status" value="1"/>
</dbReference>
<dbReference type="Pfam" id="PF03144">
    <property type="entry name" value="GTP_EFTU_D2"/>
    <property type="match status" value="1"/>
</dbReference>
<dbReference type="Pfam" id="PF03143">
    <property type="entry name" value="GTP_EFTU_D3"/>
    <property type="match status" value="1"/>
</dbReference>
<dbReference type="PRINTS" id="PR00315">
    <property type="entry name" value="ELONGATNFCT"/>
</dbReference>
<dbReference type="SUPFAM" id="SSF50465">
    <property type="entry name" value="EF-Tu/eEF-1alpha/eIF2-gamma C-terminal domain"/>
    <property type="match status" value="1"/>
</dbReference>
<dbReference type="SUPFAM" id="SSF52540">
    <property type="entry name" value="P-loop containing nucleoside triphosphate hydrolases"/>
    <property type="match status" value="1"/>
</dbReference>
<dbReference type="SUPFAM" id="SSF50447">
    <property type="entry name" value="Translation proteins"/>
    <property type="match status" value="1"/>
</dbReference>
<dbReference type="PROSITE" id="PS00301">
    <property type="entry name" value="G_TR_1"/>
    <property type="match status" value="1"/>
</dbReference>
<dbReference type="PROSITE" id="PS51722">
    <property type="entry name" value="G_TR_2"/>
    <property type="match status" value="1"/>
</dbReference>
<keyword id="KW-0963">Cytoplasm</keyword>
<keyword id="KW-0251">Elongation factor</keyword>
<keyword id="KW-0342">GTP-binding</keyword>
<keyword id="KW-0378">Hydrolase</keyword>
<keyword id="KW-0460">Magnesium</keyword>
<keyword id="KW-0479">Metal-binding</keyword>
<keyword id="KW-0547">Nucleotide-binding</keyword>
<keyword id="KW-0648">Protein biosynthesis</keyword>
<reference key="1">
    <citation type="journal article" date="1993" name="Antonie Van Leeuwenhoek">
        <title>Phylogenetic relationships of Bacteria based on comparative sequence analysis of elongation factor Tu and ATP-synthase beta-subunit genes.</title>
        <authorList>
            <person name="Ludwig W."/>
            <person name="Neumaier J."/>
            <person name="Klugbauer N."/>
            <person name="Brockmann E."/>
            <person name="Roller C."/>
            <person name="Klugbauer S."/>
            <person name="Reetz K."/>
            <person name="Schachtner I."/>
            <person name="Ludvigsen A."/>
            <person name="Bachleitner M."/>
            <person name="Fischer U."/>
            <person name="Schleifer K.H."/>
        </authorList>
    </citation>
    <scope>NUCLEOTIDE SEQUENCE [GENOMIC DNA]</scope>
    <source>
        <strain>HPGA1</strain>
    </source>
</reference>
<comment type="function">
    <text evidence="2">GTP hydrolase that promotes the GTP-dependent binding of aminoacyl-tRNA to the A-site of ribosomes during protein biosynthesis.</text>
</comment>
<comment type="catalytic activity">
    <reaction evidence="2">
        <text>GTP + H2O = GDP + phosphate + H(+)</text>
        <dbReference type="Rhea" id="RHEA:19669"/>
        <dbReference type="ChEBI" id="CHEBI:15377"/>
        <dbReference type="ChEBI" id="CHEBI:15378"/>
        <dbReference type="ChEBI" id="CHEBI:37565"/>
        <dbReference type="ChEBI" id="CHEBI:43474"/>
        <dbReference type="ChEBI" id="CHEBI:58189"/>
        <dbReference type="EC" id="3.6.5.3"/>
    </reaction>
    <physiologicalReaction direction="left-to-right" evidence="2">
        <dbReference type="Rhea" id="RHEA:19670"/>
    </physiologicalReaction>
</comment>
<comment type="subunit">
    <text evidence="2">Monomer.</text>
</comment>
<comment type="subcellular location">
    <subcellularLocation>
        <location evidence="2">Cytoplasm</location>
    </subcellularLocation>
</comment>
<comment type="similarity">
    <text evidence="2">Belongs to the TRAFAC class translation factor GTPase superfamily. Classic translation factor GTPase family. EF-Tu/EF-1A subfamily.</text>
</comment>
<feature type="chain" id="PRO_0000091335" description="Elongation factor Tu">
    <location>
        <begin position="1"/>
        <end position="400"/>
    </location>
</feature>
<feature type="domain" description="tr-type G">
    <location>
        <begin position="10"/>
        <end position="209"/>
    </location>
</feature>
<feature type="region of interest" description="G1" evidence="1">
    <location>
        <begin position="19"/>
        <end position="26"/>
    </location>
</feature>
<feature type="region of interest" description="G2" evidence="1">
    <location>
        <begin position="60"/>
        <end position="64"/>
    </location>
</feature>
<feature type="region of interest" description="G3" evidence="1">
    <location>
        <begin position="81"/>
        <end position="84"/>
    </location>
</feature>
<feature type="region of interest" description="G4" evidence="1">
    <location>
        <begin position="136"/>
        <end position="139"/>
    </location>
</feature>
<feature type="region of interest" description="G5" evidence="1">
    <location>
        <begin position="174"/>
        <end position="176"/>
    </location>
</feature>
<feature type="binding site" evidence="2">
    <location>
        <begin position="19"/>
        <end position="26"/>
    </location>
    <ligand>
        <name>GTP</name>
        <dbReference type="ChEBI" id="CHEBI:37565"/>
    </ligand>
</feature>
<feature type="binding site" evidence="2">
    <location>
        <position position="26"/>
    </location>
    <ligand>
        <name>Mg(2+)</name>
        <dbReference type="ChEBI" id="CHEBI:18420"/>
    </ligand>
</feature>
<feature type="binding site" evidence="2">
    <location>
        <begin position="81"/>
        <end position="85"/>
    </location>
    <ligand>
        <name>GTP</name>
        <dbReference type="ChEBI" id="CHEBI:37565"/>
    </ligand>
</feature>
<feature type="binding site" evidence="2">
    <location>
        <begin position="136"/>
        <end position="139"/>
    </location>
    <ligand>
        <name>GTP</name>
        <dbReference type="ChEBI" id="CHEBI:37565"/>
    </ligand>
</feature>
<organism>
    <name type="scientific">Herpetosiphon aurantiacus</name>
    <name type="common">Herpetosiphon giganteus</name>
    <dbReference type="NCBI Taxonomy" id="65"/>
    <lineage>
        <taxon>Bacteria</taxon>
        <taxon>Bacillati</taxon>
        <taxon>Chloroflexota</taxon>
        <taxon>Chloroflexia</taxon>
        <taxon>Herpetosiphonales</taxon>
        <taxon>Herpetosiphonaceae</taxon>
        <taxon>Herpetosiphon</taxon>
    </lineage>
</organism>